<comment type="function">
    <text evidence="1">DNA repair enzyme involved in the repair of deaminated bases. Selectively cleaves double-stranded DNA at the second phosphodiester bond 3' to a deoxyinosine leaving behind the intact lesion on the nicked DNA.</text>
</comment>
<comment type="catalytic activity">
    <reaction evidence="1">
        <text>Endonucleolytic cleavage at apurinic or apyrimidinic sites to products with a 5'-phosphate.</text>
        <dbReference type="EC" id="3.1.21.7"/>
    </reaction>
</comment>
<comment type="cofactor">
    <cofactor evidence="1">
        <name>Mg(2+)</name>
        <dbReference type="ChEBI" id="CHEBI:18420"/>
    </cofactor>
</comment>
<comment type="subcellular location">
    <subcellularLocation>
        <location evidence="1">Cytoplasm</location>
    </subcellularLocation>
</comment>
<comment type="similarity">
    <text evidence="1">Belongs to the endonuclease V family.</text>
</comment>
<organism>
    <name type="scientific">Salmonella dublin (strain CT_02021853)</name>
    <dbReference type="NCBI Taxonomy" id="439851"/>
    <lineage>
        <taxon>Bacteria</taxon>
        <taxon>Pseudomonadati</taxon>
        <taxon>Pseudomonadota</taxon>
        <taxon>Gammaproteobacteria</taxon>
        <taxon>Enterobacterales</taxon>
        <taxon>Enterobacteriaceae</taxon>
        <taxon>Salmonella</taxon>
    </lineage>
</organism>
<sequence length="223" mass="24746">MDLASLRAQQIELASSVCREDRLDKDPPAFIGGADVGFEQGGEVTRAAMVLLKYPSLELVEYKVARIATTMPYIPGFLSFREYPALLAAWEQLSQKPDLLFVDGHGISHPRRLGVASHFGLLVDVPTIGVAKKRLCGKFEPLSAEPGALSPLMDKGEQLAWVWRSKARCNPLFIATGHRVSTDSALAWVQRCMKGYRLPEPTRWADAVASGRPAFVRWQEIQR</sequence>
<reference key="1">
    <citation type="journal article" date="2011" name="J. Bacteriol.">
        <title>Comparative genomics of 28 Salmonella enterica isolates: evidence for CRISPR-mediated adaptive sublineage evolution.</title>
        <authorList>
            <person name="Fricke W.F."/>
            <person name="Mammel M.K."/>
            <person name="McDermott P.F."/>
            <person name="Tartera C."/>
            <person name="White D.G."/>
            <person name="Leclerc J.E."/>
            <person name="Ravel J."/>
            <person name="Cebula T.A."/>
        </authorList>
    </citation>
    <scope>NUCLEOTIDE SEQUENCE [LARGE SCALE GENOMIC DNA]</scope>
    <source>
        <strain>CT_02021853</strain>
    </source>
</reference>
<accession>B5FQL3</accession>
<protein>
    <recommendedName>
        <fullName evidence="1">Endonuclease V</fullName>
        <ecNumber evidence="1">3.1.21.7</ecNumber>
    </recommendedName>
    <alternativeName>
        <fullName evidence="1">Deoxyinosine 3'endonuclease</fullName>
    </alternativeName>
    <alternativeName>
        <fullName evidence="1">Deoxyribonuclease V</fullName>
        <shortName evidence="1">DNase V</shortName>
    </alternativeName>
</protein>
<keyword id="KW-0963">Cytoplasm</keyword>
<keyword id="KW-0227">DNA damage</keyword>
<keyword id="KW-0234">DNA repair</keyword>
<keyword id="KW-0255">Endonuclease</keyword>
<keyword id="KW-0378">Hydrolase</keyword>
<keyword id="KW-0460">Magnesium</keyword>
<keyword id="KW-0479">Metal-binding</keyword>
<keyword id="KW-0540">Nuclease</keyword>
<proteinExistence type="inferred from homology"/>
<evidence type="ECO:0000255" key="1">
    <source>
        <dbReference type="HAMAP-Rule" id="MF_00801"/>
    </source>
</evidence>
<feature type="chain" id="PRO_1000191579" description="Endonuclease V">
    <location>
        <begin position="1"/>
        <end position="223"/>
    </location>
</feature>
<feature type="binding site" evidence="1">
    <location>
        <position position="35"/>
    </location>
    <ligand>
        <name>Mg(2+)</name>
        <dbReference type="ChEBI" id="CHEBI:18420"/>
    </ligand>
</feature>
<feature type="binding site" evidence="1">
    <location>
        <position position="103"/>
    </location>
    <ligand>
        <name>Mg(2+)</name>
        <dbReference type="ChEBI" id="CHEBI:18420"/>
    </ligand>
</feature>
<feature type="site" description="Interaction with target DNA" evidence="1">
    <location>
        <position position="73"/>
    </location>
</feature>
<dbReference type="EC" id="3.1.21.7" evidence="1"/>
<dbReference type="EMBL" id="CP001144">
    <property type="protein sequence ID" value="ACH75155.1"/>
    <property type="molecule type" value="Genomic_DNA"/>
</dbReference>
<dbReference type="RefSeq" id="WP_000362359.1">
    <property type="nucleotide sequence ID" value="NC_011205.1"/>
</dbReference>
<dbReference type="SMR" id="B5FQL3"/>
<dbReference type="KEGG" id="sed:SeD_A4575"/>
<dbReference type="HOGENOM" id="CLU_047631_1_0_6"/>
<dbReference type="Proteomes" id="UP000008322">
    <property type="component" value="Chromosome"/>
</dbReference>
<dbReference type="GO" id="GO:0005737">
    <property type="term" value="C:cytoplasm"/>
    <property type="evidence" value="ECO:0007669"/>
    <property type="project" value="UniProtKB-SubCell"/>
</dbReference>
<dbReference type="GO" id="GO:0043737">
    <property type="term" value="F:deoxyribonuclease V activity"/>
    <property type="evidence" value="ECO:0007669"/>
    <property type="project" value="UniProtKB-UniRule"/>
</dbReference>
<dbReference type="GO" id="GO:0000287">
    <property type="term" value="F:magnesium ion binding"/>
    <property type="evidence" value="ECO:0007669"/>
    <property type="project" value="UniProtKB-UniRule"/>
</dbReference>
<dbReference type="GO" id="GO:0016891">
    <property type="term" value="F:RNA endonuclease activity, producing 5'-phosphomonoesters"/>
    <property type="evidence" value="ECO:0007669"/>
    <property type="project" value="TreeGrafter"/>
</dbReference>
<dbReference type="GO" id="GO:0003727">
    <property type="term" value="F:single-stranded RNA binding"/>
    <property type="evidence" value="ECO:0007669"/>
    <property type="project" value="TreeGrafter"/>
</dbReference>
<dbReference type="GO" id="GO:0006281">
    <property type="term" value="P:DNA repair"/>
    <property type="evidence" value="ECO:0007669"/>
    <property type="project" value="UniProtKB-UniRule"/>
</dbReference>
<dbReference type="CDD" id="cd06559">
    <property type="entry name" value="Endonuclease_V"/>
    <property type="match status" value="1"/>
</dbReference>
<dbReference type="FunFam" id="3.30.2170.10:FF:000001">
    <property type="entry name" value="Endonuclease V"/>
    <property type="match status" value="1"/>
</dbReference>
<dbReference type="Gene3D" id="3.30.2170.10">
    <property type="entry name" value="archaeoglobus fulgidus dsm 4304 superfamily"/>
    <property type="match status" value="1"/>
</dbReference>
<dbReference type="HAMAP" id="MF_00801">
    <property type="entry name" value="Endonuclease_5"/>
    <property type="match status" value="1"/>
</dbReference>
<dbReference type="InterPro" id="IPR007581">
    <property type="entry name" value="Endonuclease-V"/>
</dbReference>
<dbReference type="NCBIfam" id="NF008629">
    <property type="entry name" value="PRK11617.1"/>
    <property type="match status" value="1"/>
</dbReference>
<dbReference type="PANTHER" id="PTHR28511">
    <property type="entry name" value="ENDONUCLEASE V"/>
    <property type="match status" value="1"/>
</dbReference>
<dbReference type="PANTHER" id="PTHR28511:SF1">
    <property type="entry name" value="ENDONUCLEASE V"/>
    <property type="match status" value="1"/>
</dbReference>
<dbReference type="Pfam" id="PF04493">
    <property type="entry name" value="Endonuclease_5"/>
    <property type="match status" value="1"/>
</dbReference>
<name>NFI_SALDC</name>
<gene>
    <name evidence="1" type="primary">nfi</name>
    <name type="ordered locus">SeD_A4575</name>
</gene>